<dbReference type="EC" id="4.3.3.7" evidence="1"/>
<dbReference type="EMBL" id="CP000252">
    <property type="protein sequence ID" value="ABC77312.1"/>
    <property type="status" value="ALT_INIT"/>
    <property type="molecule type" value="Genomic_DNA"/>
</dbReference>
<dbReference type="RefSeq" id="WP_041584832.1">
    <property type="nucleotide sequence ID" value="NC_007759.1"/>
</dbReference>
<dbReference type="SMR" id="Q2LTA1"/>
<dbReference type="FunCoup" id="Q2LTA1">
    <property type="interactions" value="463"/>
</dbReference>
<dbReference type="STRING" id="56780.SYN_02161"/>
<dbReference type="KEGG" id="sat:SYN_02161"/>
<dbReference type="eggNOG" id="COG0329">
    <property type="taxonomic scope" value="Bacteria"/>
</dbReference>
<dbReference type="HOGENOM" id="CLU_049343_7_1_7"/>
<dbReference type="InParanoid" id="Q2LTA1"/>
<dbReference type="OrthoDB" id="9782828at2"/>
<dbReference type="UniPathway" id="UPA00034">
    <property type="reaction ID" value="UER00017"/>
</dbReference>
<dbReference type="Proteomes" id="UP000001933">
    <property type="component" value="Chromosome"/>
</dbReference>
<dbReference type="GO" id="GO:0005829">
    <property type="term" value="C:cytosol"/>
    <property type="evidence" value="ECO:0007669"/>
    <property type="project" value="TreeGrafter"/>
</dbReference>
<dbReference type="GO" id="GO:0008840">
    <property type="term" value="F:4-hydroxy-tetrahydrodipicolinate synthase activity"/>
    <property type="evidence" value="ECO:0007669"/>
    <property type="project" value="UniProtKB-UniRule"/>
</dbReference>
<dbReference type="GO" id="GO:0019877">
    <property type="term" value="P:diaminopimelate biosynthetic process"/>
    <property type="evidence" value="ECO:0007669"/>
    <property type="project" value="UniProtKB-UniRule"/>
</dbReference>
<dbReference type="GO" id="GO:0009089">
    <property type="term" value="P:lysine biosynthetic process via diaminopimelate"/>
    <property type="evidence" value="ECO:0007669"/>
    <property type="project" value="UniProtKB-UniRule"/>
</dbReference>
<dbReference type="CDD" id="cd00950">
    <property type="entry name" value="DHDPS"/>
    <property type="match status" value="1"/>
</dbReference>
<dbReference type="Gene3D" id="3.20.20.70">
    <property type="entry name" value="Aldolase class I"/>
    <property type="match status" value="1"/>
</dbReference>
<dbReference type="HAMAP" id="MF_00418">
    <property type="entry name" value="DapA"/>
    <property type="match status" value="1"/>
</dbReference>
<dbReference type="InterPro" id="IPR013785">
    <property type="entry name" value="Aldolase_TIM"/>
</dbReference>
<dbReference type="InterPro" id="IPR005263">
    <property type="entry name" value="DapA"/>
</dbReference>
<dbReference type="InterPro" id="IPR002220">
    <property type="entry name" value="DapA-like"/>
</dbReference>
<dbReference type="InterPro" id="IPR020625">
    <property type="entry name" value="Schiff_base-form_aldolases_AS"/>
</dbReference>
<dbReference type="InterPro" id="IPR020624">
    <property type="entry name" value="Schiff_base-form_aldolases_CS"/>
</dbReference>
<dbReference type="NCBIfam" id="TIGR00674">
    <property type="entry name" value="dapA"/>
    <property type="match status" value="1"/>
</dbReference>
<dbReference type="PANTHER" id="PTHR12128:SF66">
    <property type="entry name" value="4-HYDROXY-2-OXOGLUTARATE ALDOLASE, MITOCHONDRIAL"/>
    <property type="match status" value="1"/>
</dbReference>
<dbReference type="PANTHER" id="PTHR12128">
    <property type="entry name" value="DIHYDRODIPICOLINATE SYNTHASE"/>
    <property type="match status" value="1"/>
</dbReference>
<dbReference type="Pfam" id="PF00701">
    <property type="entry name" value="DHDPS"/>
    <property type="match status" value="1"/>
</dbReference>
<dbReference type="PIRSF" id="PIRSF001365">
    <property type="entry name" value="DHDPS"/>
    <property type="match status" value="1"/>
</dbReference>
<dbReference type="PRINTS" id="PR00146">
    <property type="entry name" value="DHPICSNTHASE"/>
</dbReference>
<dbReference type="SMART" id="SM01130">
    <property type="entry name" value="DHDPS"/>
    <property type="match status" value="1"/>
</dbReference>
<dbReference type="SUPFAM" id="SSF51569">
    <property type="entry name" value="Aldolase"/>
    <property type="match status" value="1"/>
</dbReference>
<dbReference type="PROSITE" id="PS00665">
    <property type="entry name" value="DHDPS_1"/>
    <property type="match status" value="1"/>
</dbReference>
<dbReference type="PROSITE" id="PS00666">
    <property type="entry name" value="DHDPS_2"/>
    <property type="match status" value="1"/>
</dbReference>
<keyword id="KW-0028">Amino-acid biosynthesis</keyword>
<keyword id="KW-0963">Cytoplasm</keyword>
<keyword id="KW-0220">Diaminopimelate biosynthesis</keyword>
<keyword id="KW-0456">Lyase</keyword>
<keyword id="KW-0457">Lysine biosynthesis</keyword>
<keyword id="KW-1185">Reference proteome</keyword>
<keyword id="KW-0704">Schiff base</keyword>
<feature type="chain" id="PRO_0000340994" description="4-hydroxy-tetrahydrodipicolinate synthase">
    <location>
        <begin position="1"/>
        <end position="291"/>
    </location>
</feature>
<feature type="active site" description="Proton donor/acceptor" evidence="1">
    <location>
        <position position="132"/>
    </location>
</feature>
<feature type="active site" description="Schiff-base intermediate with substrate" evidence="1">
    <location>
        <position position="160"/>
    </location>
</feature>
<feature type="binding site" evidence="1">
    <location>
        <position position="44"/>
    </location>
    <ligand>
        <name>pyruvate</name>
        <dbReference type="ChEBI" id="CHEBI:15361"/>
    </ligand>
</feature>
<feature type="binding site" evidence="1">
    <location>
        <position position="202"/>
    </location>
    <ligand>
        <name>pyruvate</name>
        <dbReference type="ChEBI" id="CHEBI:15361"/>
    </ligand>
</feature>
<feature type="site" description="Part of a proton relay during catalysis" evidence="1">
    <location>
        <position position="43"/>
    </location>
</feature>
<feature type="site" description="Part of a proton relay during catalysis" evidence="1">
    <location>
        <position position="106"/>
    </location>
</feature>
<accession>Q2LTA1</accession>
<reference key="1">
    <citation type="journal article" date="2007" name="Proc. Natl. Acad. Sci. U.S.A.">
        <title>The genome of Syntrophus aciditrophicus: life at the thermodynamic limit of microbial growth.</title>
        <authorList>
            <person name="McInerney M.J."/>
            <person name="Rohlin L."/>
            <person name="Mouttaki H."/>
            <person name="Kim U."/>
            <person name="Krupp R.S."/>
            <person name="Rios-Hernandez L."/>
            <person name="Sieber J."/>
            <person name="Struchtemeyer C.G."/>
            <person name="Bhattacharyya A."/>
            <person name="Campbell J.W."/>
            <person name="Gunsalus R.P."/>
        </authorList>
    </citation>
    <scope>NUCLEOTIDE SEQUENCE [LARGE SCALE GENOMIC DNA]</scope>
    <source>
        <strain>SB</strain>
    </source>
</reference>
<evidence type="ECO:0000255" key="1">
    <source>
        <dbReference type="HAMAP-Rule" id="MF_00418"/>
    </source>
</evidence>
<evidence type="ECO:0000305" key="2"/>
<name>DAPA_SYNAS</name>
<gene>
    <name evidence="1" type="primary">dapA</name>
    <name type="ordered locus">SYNAS_14330</name>
    <name type="ORF">SYN_02161</name>
</gene>
<sequence length="291" mass="31454">MFKGAIVAIVTPFKNGEIDEPALRDLIEFQIENGTDGIVPCGTTGESATLSHEEHDRVIEITIDAVRKRVPVIAGTGSNSTVEAMRLTKHAHEAGADGVLVVAPYYNRPTQEGLYQHYKALAESVPIPIIPYNIPSRTGVNILPETVARLAKISNIVGIKEASGSLKQMNDVIRLCDDGFSVLSGDDFFTLPLLTLGGKGVISVISNVAPADMACLVDAFEAGNMKKARAMHDKMVPLVDALFIETNPTPVKAALALMGKISEDVRLPLYRMTETSREKLKRVMQNYGLIG</sequence>
<comment type="function">
    <text evidence="1">Catalyzes the condensation of (S)-aspartate-beta-semialdehyde [(S)-ASA] and pyruvate to 4-hydroxy-tetrahydrodipicolinate (HTPA).</text>
</comment>
<comment type="catalytic activity">
    <reaction evidence="1">
        <text>L-aspartate 4-semialdehyde + pyruvate = (2S,4S)-4-hydroxy-2,3,4,5-tetrahydrodipicolinate + H2O + H(+)</text>
        <dbReference type="Rhea" id="RHEA:34171"/>
        <dbReference type="ChEBI" id="CHEBI:15361"/>
        <dbReference type="ChEBI" id="CHEBI:15377"/>
        <dbReference type="ChEBI" id="CHEBI:15378"/>
        <dbReference type="ChEBI" id="CHEBI:67139"/>
        <dbReference type="ChEBI" id="CHEBI:537519"/>
        <dbReference type="EC" id="4.3.3.7"/>
    </reaction>
</comment>
<comment type="pathway">
    <text evidence="1">Amino-acid biosynthesis; L-lysine biosynthesis via DAP pathway; (S)-tetrahydrodipicolinate from L-aspartate: step 3/4.</text>
</comment>
<comment type="subunit">
    <text evidence="1">Homotetramer; dimer of dimers.</text>
</comment>
<comment type="subcellular location">
    <subcellularLocation>
        <location evidence="1">Cytoplasm</location>
    </subcellularLocation>
</comment>
<comment type="similarity">
    <text evidence="1">Belongs to the DapA family.</text>
</comment>
<comment type="caution">
    <text evidence="2">Was originally thought to be a dihydrodipicolinate synthase (DHDPS), catalyzing the condensation of (S)-aspartate-beta-semialdehyde [(S)-ASA] and pyruvate to dihydrodipicolinate (DHDP). However, it was shown in E.coli that the product of the enzymatic reaction is not dihydrodipicolinate but in fact (4S)-4-hydroxy-2,3,4,5-tetrahydro-(2S)-dipicolinic acid (HTPA), and that the consecutive dehydration reaction leading to DHDP is not spontaneous but catalyzed by DapB.</text>
</comment>
<comment type="sequence caution" evidence="2">
    <conflict type="erroneous initiation">
        <sequence resource="EMBL-CDS" id="ABC77312"/>
    </conflict>
</comment>
<protein>
    <recommendedName>
        <fullName evidence="1">4-hydroxy-tetrahydrodipicolinate synthase</fullName>
        <shortName evidence="1">HTPA synthase</shortName>
        <ecNumber evidence="1">4.3.3.7</ecNumber>
    </recommendedName>
</protein>
<proteinExistence type="inferred from homology"/>
<organism>
    <name type="scientific">Syntrophus aciditrophicus (strain SB)</name>
    <dbReference type="NCBI Taxonomy" id="56780"/>
    <lineage>
        <taxon>Bacteria</taxon>
        <taxon>Pseudomonadati</taxon>
        <taxon>Thermodesulfobacteriota</taxon>
        <taxon>Syntrophia</taxon>
        <taxon>Syntrophales</taxon>
        <taxon>Syntrophaceae</taxon>
        <taxon>Syntrophus</taxon>
    </lineage>
</organism>